<proteinExistence type="inferred from homology"/>
<evidence type="ECO:0000255" key="1"/>
<evidence type="ECO:0000305" key="2"/>
<organism>
    <name type="scientific">Oryza sativa subsp. indica</name>
    <name type="common">Rice</name>
    <dbReference type="NCBI Taxonomy" id="39946"/>
    <lineage>
        <taxon>Eukaryota</taxon>
        <taxon>Viridiplantae</taxon>
        <taxon>Streptophyta</taxon>
        <taxon>Embryophyta</taxon>
        <taxon>Tracheophyta</taxon>
        <taxon>Spermatophyta</taxon>
        <taxon>Magnoliopsida</taxon>
        <taxon>Liliopsida</taxon>
        <taxon>Poales</taxon>
        <taxon>Poaceae</taxon>
        <taxon>BOP clade</taxon>
        <taxon>Oryzoideae</taxon>
        <taxon>Oryzeae</taxon>
        <taxon>Oryzinae</taxon>
        <taxon>Oryza</taxon>
        <taxon>Oryza sativa</taxon>
    </lineage>
</organism>
<protein>
    <recommendedName>
        <fullName>GDT1-like protein 4</fullName>
    </recommendedName>
</protein>
<name>GDT14_ORYSI</name>
<gene>
    <name type="ORF">OsI_29993</name>
</gene>
<accession>A2YXC7</accession>
<comment type="subcellular location">
    <subcellularLocation>
        <location evidence="2">Membrane</location>
        <topology evidence="2">Multi-pass membrane protein</topology>
    </subcellularLocation>
</comment>
<comment type="similarity">
    <text evidence="2">Belongs to the GDT1 family.</text>
</comment>
<keyword id="KW-0472">Membrane</keyword>
<keyword id="KW-1185">Reference proteome</keyword>
<keyword id="KW-0732">Signal</keyword>
<keyword id="KW-0812">Transmembrane</keyword>
<keyword id="KW-1133">Transmembrane helix</keyword>
<sequence>MARRVSTTRLLLLLLLVAAAAAAAAGDQEDPRGGGDNGTARLDRRTKMFLHAARASDGGATGMEKAGLGLFDAFFASLSMILVSEIGDETFIIAALMAMRHPKSTVLSGALSALVVMTILSTGLGRIVPNLISRKHTNSAATVLYAFFGLRLLYIAWRSDSKASQKKEIEEVEEKLEAGQGKSTFRRIFSRFCTPIFLESFVLTFLAEWGDRSQIATIALATHKNAVGVAVGATLGHTICTSFAVVGGSMLASKISQGTVATIGGLLFLGFSLSSYFYPPL</sequence>
<reference key="1">
    <citation type="journal article" date="2005" name="PLoS Biol.">
        <title>The genomes of Oryza sativa: a history of duplications.</title>
        <authorList>
            <person name="Yu J."/>
            <person name="Wang J."/>
            <person name="Lin W."/>
            <person name="Li S."/>
            <person name="Li H."/>
            <person name="Zhou J."/>
            <person name="Ni P."/>
            <person name="Dong W."/>
            <person name="Hu S."/>
            <person name="Zeng C."/>
            <person name="Zhang J."/>
            <person name="Zhang Y."/>
            <person name="Li R."/>
            <person name="Xu Z."/>
            <person name="Li S."/>
            <person name="Li X."/>
            <person name="Zheng H."/>
            <person name="Cong L."/>
            <person name="Lin L."/>
            <person name="Yin J."/>
            <person name="Geng J."/>
            <person name="Li G."/>
            <person name="Shi J."/>
            <person name="Liu J."/>
            <person name="Lv H."/>
            <person name="Li J."/>
            <person name="Wang J."/>
            <person name="Deng Y."/>
            <person name="Ran L."/>
            <person name="Shi X."/>
            <person name="Wang X."/>
            <person name="Wu Q."/>
            <person name="Li C."/>
            <person name="Ren X."/>
            <person name="Wang J."/>
            <person name="Wang X."/>
            <person name="Li D."/>
            <person name="Liu D."/>
            <person name="Zhang X."/>
            <person name="Ji Z."/>
            <person name="Zhao W."/>
            <person name="Sun Y."/>
            <person name="Zhang Z."/>
            <person name="Bao J."/>
            <person name="Han Y."/>
            <person name="Dong L."/>
            <person name="Ji J."/>
            <person name="Chen P."/>
            <person name="Wu S."/>
            <person name="Liu J."/>
            <person name="Xiao Y."/>
            <person name="Bu D."/>
            <person name="Tan J."/>
            <person name="Yang L."/>
            <person name="Ye C."/>
            <person name="Zhang J."/>
            <person name="Xu J."/>
            <person name="Zhou Y."/>
            <person name="Yu Y."/>
            <person name="Zhang B."/>
            <person name="Zhuang S."/>
            <person name="Wei H."/>
            <person name="Liu B."/>
            <person name="Lei M."/>
            <person name="Yu H."/>
            <person name="Li Y."/>
            <person name="Xu H."/>
            <person name="Wei S."/>
            <person name="He X."/>
            <person name="Fang L."/>
            <person name="Zhang Z."/>
            <person name="Zhang Y."/>
            <person name="Huang X."/>
            <person name="Su Z."/>
            <person name="Tong W."/>
            <person name="Li J."/>
            <person name="Tong Z."/>
            <person name="Li S."/>
            <person name="Ye J."/>
            <person name="Wang L."/>
            <person name="Fang L."/>
            <person name="Lei T."/>
            <person name="Chen C.-S."/>
            <person name="Chen H.-C."/>
            <person name="Xu Z."/>
            <person name="Li H."/>
            <person name="Huang H."/>
            <person name="Zhang F."/>
            <person name="Xu H."/>
            <person name="Li N."/>
            <person name="Zhao C."/>
            <person name="Li S."/>
            <person name="Dong L."/>
            <person name="Huang Y."/>
            <person name="Li L."/>
            <person name="Xi Y."/>
            <person name="Qi Q."/>
            <person name="Li W."/>
            <person name="Zhang B."/>
            <person name="Hu W."/>
            <person name="Zhang Y."/>
            <person name="Tian X."/>
            <person name="Jiao Y."/>
            <person name="Liang X."/>
            <person name="Jin J."/>
            <person name="Gao L."/>
            <person name="Zheng W."/>
            <person name="Hao B."/>
            <person name="Liu S.-M."/>
            <person name="Wang W."/>
            <person name="Yuan L."/>
            <person name="Cao M."/>
            <person name="McDermott J."/>
            <person name="Samudrala R."/>
            <person name="Wang J."/>
            <person name="Wong G.K.-S."/>
            <person name="Yang H."/>
        </authorList>
    </citation>
    <scope>NUCLEOTIDE SEQUENCE [LARGE SCALE GENOMIC DNA]</scope>
    <source>
        <strain>cv. 93-11</strain>
    </source>
</reference>
<feature type="signal peptide" evidence="1">
    <location>
        <begin position="1"/>
        <end position="22"/>
    </location>
</feature>
<feature type="chain" id="PRO_0000398774" description="GDT1-like protein 4">
    <location>
        <begin position="23"/>
        <end position="281"/>
    </location>
</feature>
<feature type="transmembrane region" description="Helical" evidence="1">
    <location>
        <begin position="66"/>
        <end position="86"/>
    </location>
</feature>
<feature type="transmembrane region" description="Helical" evidence="1">
    <location>
        <begin position="105"/>
        <end position="125"/>
    </location>
</feature>
<feature type="transmembrane region" description="Helical" evidence="1">
    <location>
        <begin position="137"/>
        <end position="157"/>
    </location>
</feature>
<feature type="transmembrane region" description="Helical" evidence="1">
    <location>
        <begin position="188"/>
        <end position="208"/>
    </location>
</feature>
<feature type="transmembrane region" description="Helical" evidence="1">
    <location>
        <begin position="226"/>
        <end position="246"/>
    </location>
</feature>
<feature type="transmembrane region" description="Helical" evidence="1">
    <location>
        <begin position="258"/>
        <end position="278"/>
    </location>
</feature>
<dbReference type="EMBL" id="CM000133">
    <property type="protein sequence ID" value="EAZ07738.1"/>
    <property type="molecule type" value="Genomic_DNA"/>
</dbReference>
<dbReference type="EnsemblPlants" id="BGIOSGA026603-TA">
    <property type="protein sequence ID" value="BGIOSGA026603-PA"/>
    <property type="gene ID" value="BGIOSGA026603"/>
</dbReference>
<dbReference type="EnsemblPlants" id="OsKYG_08g0022390.01">
    <property type="protein sequence ID" value="OsKYG_08g0022390.01"/>
    <property type="gene ID" value="OsKYG_08g0022390"/>
</dbReference>
<dbReference type="EnsemblPlants" id="OsLima_08g0022050.01">
    <property type="protein sequence ID" value="OsLima_08g0022050.01"/>
    <property type="gene ID" value="OsLima_08g0022050"/>
</dbReference>
<dbReference type="EnsemblPlants" id="OsLiXu_08g0023010.01">
    <property type="protein sequence ID" value="OsLiXu_08g0023010.01"/>
    <property type="gene ID" value="OsLiXu_08g0023010"/>
</dbReference>
<dbReference type="EnsemblPlants" id="OsMH63_08G022910_01">
    <property type="protein sequence ID" value="OsMH63_08G022910_01"/>
    <property type="gene ID" value="OsMH63_08G022910"/>
</dbReference>
<dbReference type="EnsemblPlants" id="OsPr106_08g0022810.01">
    <property type="protein sequence ID" value="OsPr106_08g0022810.01"/>
    <property type="gene ID" value="OsPr106_08g0022810"/>
</dbReference>
<dbReference type="EnsemblPlants" id="OsZS97_08G022750_02">
    <property type="protein sequence ID" value="OsZS97_08G022750_02"/>
    <property type="gene ID" value="OsZS97_08G022750"/>
</dbReference>
<dbReference type="Gramene" id="BGIOSGA026603-TA">
    <property type="protein sequence ID" value="BGIOSGA026603-PA"/>
    <property type="gene ID" value="BGIOSGA026603"/>
</dbReference>
<dbReference type="Gramene" id="OsKYG_08g0022390.01">
    <property type="protein sequence ID" value="OsKYG_08g0022390.01"/>
    <property type="gene ID" value="OsKYG_08g0022390"/>
</dbReference>
<dbReference type="Gramene" id="OsLima_08g0022050.01">
    <property type="protein sequence ID" value="OsLima_08g0022050.01"/>
    <property type="gene ID" value="OsLima_08g0022050"/>
</dbReference>
<dbReference type="Gramene" id="OsLiXu_08g0023010.01">
    <property type="protein sequence ID" value="OsLiXu_08g0023010.01"/>
    <property type="gene ID" value="OsLiXu_08g0023010"/>
</dbReference>
<dbReference type="Gramene" id="OsMH63_08G022910_01">
    <property type="protein sequence ID" value="OsMH63_08G022910_01"/>
    <property type="gene ID" value="OsMH63_08G022910"/>
</dbReference>
<dbReference type="Gramene" id="OsPr106_08g0022810.01">
    <property type="protein sequence ID" value="OsPr106_08g0022810.01"/>
    <property type="gene ID" value="OsPr106_08g0022810"/>
</dbReference>
<dbReference type="Gramene" id="OsZS97_08G022750_02">
    <property type="protein sequence ID" value="OsZS97_08G022750_02"/>
    <property type="gene ID" value="OsZS97_08G022750"/>
</dbReference>
<dbReference type="HOGENOM" id="CLU_040186_0_1_1"/>
<dbReference type="OMA" id="CSIIVTE"/>
<dbReference type="Proteomes" id="UP000007015">
    <property type="component" value="Chromosome 8"/>
</dbReference>
<dbReference type="GO" id="GO:0005794">
    <property type="term" value="C:Golgi apparatus"/>
    <property type="evidence" value="ECO:0007669"/>
    <property type="project" value="TreeGrafter"/>
</dbReference>
<dbReference type="GO" id="GO:0016020">
    <property type="term" value="C:membrane"/>
    <property type="evidence" value="ECO:0007669"/>
    <property type="project" value="UniProtKB-SubCell"/>
</dbReference>
<dbReference type="GO" id="GO:0015085">
    <property type="term" value="F:calcium ion transmembrane transporter activity"/>
    <property type="evidence" value="ECO:0007669"/>
    <property type="project" value="TreeGrafter"/>
</dbReference>
<dbReference type="GO" id="GO:0005384">
    <property type="term" value="F:manganese ion transmembrane transporter activity"/>
    <property type="evidence" value="ECO:0007669"/>
    <property type="project" value="TreeGrafter"/>
</dbReference>
<dbReference type="GO" id="GO:0032468">
    <property type="term" value="P:Golgi calcium ion homeostasis"/>
    <property type="evidence" value="ECO:0007669"/>
    <property type="project" value="TreeGrafter"/>
</dbReference>
<dbReference type="GO" id="GO:0032472">
    <property type="term" value="P:Golgi calcium ion transport"/>
    <property type="evidence" value="ECO:0007669"/>
    <property type="project" value="TreeGrafter"/>
</dbReference>
<dbReference type="InterPro" id="IPR001727">
    <property type="entry name" value="GDT1-like"/>
</dbReference>
<dbReference type="PANTHER" id="PTHR12608:SF9">
    <property type="entry name" value="GDT1-LIKE PROTEIN 3"/>
    <property type="match status" value="1"/>
</dbReference>
<dbReference type="PANTHER" id="PTHR12608">
    <property type="entry name" value="TRANSMEMBRANE PROTEIN HTP-1 RELATED"/>
    <property type="match status" value="1"/>
</dbReference>
<dbReference type="Pfam" id="PF01169">
    <property type="entry name" value="GDT1"/>
    <property type="match status" value="2"/>
</dbReference>